<reference key="1">
    <citation type="journal article" date="2002" name="DNA Res.">
        <title>Complete genomic sequence of nitrogen-fixing symbiotic bacterium Bradyrhizobium japonicum USDA110.</title>
        <authorList>
            <person name="Kaneko T."/>
            <person name="Nakamura Y."/>
            <person name="Sato S."/>
            <person name="Minamisawa K."/>
            <person name="Uchiumi T."/>
            <person name="Sasamoto S."/>
            <person name="Watanabe A."/>
            <person name="Idesawa K."/>
            <person name="Iriguchi M."/>
            <person name="Kawashima K."/>
            <person name="Kohara M."/>
            <person name="Matsumoto M."/>
            <person name="Shimpo S."/>
            <person name="Tsuruoka H."/>
            <person name="Wada T."/>
            <person name="Yamada M."/>
            <person name="Tabata S."/>
        </authorList>
    </citation>
    <scope>NUCLEOTIDE SEQUENCE [LARGE SCALE GENOMIC DNA]</scope>
    <source>
        <strain>JCM 10833 / BCRC 13528 / IAM 13628 / NBRC 14792 / USDA 110</strain>
    </source>
</reference>
<comment type="function">
    <text evidence="1">O-methyltransferase that catalyzes the 2 O-methylation steps in the ubiquinone biosynthetic pathway.</text>
</comment>
<comment type="catalytic activity">
    <reaction evidence="1">
        <text>a 3-demethylubiquinol + S-adenosyl-L-methionine = a ubiquinol + S-adenosyl-L-homocysteine + H(+)</text>
        <dbReference type="Rhea" id="RHEA:44380"/>
        <dbReference type="Rhea" id="RHEA-COMP:9566"/>
        <dbReference type="Rhea" id="RHEA-COMP:10914"/>
        <dbReference type="ChEBI" id="CHEBI:15378"/>
        <dbReference type="ChEBI" id="CHEBI:17976"/>
        <dbReference type="ChEBI" id="CHEBI:57856"/>
        <dbReference type="ChEBI" id="CHEBI:59789"/>
        <dbReference type="ChEBI" id="CHEBI:84422"/>
        <dbReference type="EC" id="2.1.1.64"/>
    </reaction>
</comment>
<comment type="catalytic activity">
    <reaction evidence="1">
        <text>a 3-(all-trans-polyprenyl)benzene-1,2-diol + S-adenosyl-L-methionine = a 2-methoxy-6-(all-trans-polyprenyl)phenol + S-adenosyl-L-homocysteine + H(+)</text>
        <dbReference type="Rhea" id="RHEA:31411"/>
        <dbReference type="Rhea" id="RHEA-COMP:9550"/>
        <dbReference type="Rhea" id="RHEA-COMP:9551"/>
        <dbReference type="ChEBI" id="CHEBI:15378"/>
        <dbReference type="ChEBI" id="CHEBI:57856"/>
        <dbReference type="ChEBI" id="CHEBI:59789"/>
        <dbReference type="ChEBI" id="CHEBI:62729"/>
        <dbReference type="ChEBI" id="CHEBI:62731"/>
        <dbReference type="EC" id="2.1.1.222"/>
    </reaction>
</comment>
<comment type="pathway">
    <text evidence="1">Cofactor biosynthesis; ubiquinone biosynthesis.</text>
</comment>
<comment type="similarity">
    <text evidence="1">Belongs to the methyltransferase superfamily. UbiG/COQ3 family.</text>
</comment>
<protein>
    <recommendedName>
        <fullName evidence="1">Ubiquinone biosynthesis O-methyltransferase</fullName>
    </recommendedName>
    <alternativeName>
        <fullName evidence="1">2-polyprenyl-6-hydroxyphenol methylase</fullName>
        <ecNumber evidence="1">2.1.1.222</ecNumber>
    </alternativeName>
    <alternativeName>
        <fullName evidence="1">3-demethylubiquinone 3-O-methyltransferase</fullName>
        <ecNumber evidence="1">2.1.1.64</ecNumber>
    </alternativeName>
</protein>
<sequence length="253" mass="28120">MQQNTSATAQPGSTVDAAEIAKFSKLSAEWWDPKGKMAPLHRINPLRLGYIRDAACRKFERNVRSLNCLGGLRVLDIGCGAGLLCEPLSRLGAQVIGVDPSQSNIAAAKLHADKSHLAIDYRCTTVEEIDPRERFDIVLAMEVVEHVVDVGVFLKRCAAMLKPNGLMVVSTLNRNWKSFALAIVGAEYVLRWLPRGTHEWNKFVTPDELTKYLLDNRLVITEQTGVVYSPFADKWTLSSDMDVNYMVVAEGMV</sequence>
<keyword id="KW-0489">Methyltransferase</keyword>
<keyword id="KW-1185">Reference proteome</keyword>
<keyword id="KW-0949">S-adenosyl-L-methionine</keyword>
<keyword id="KW-0808">Transferase</keyword>
<keyword id="KW-0831">Ubiquinone biosynthesis</keyword>
<name>UBIG_BRADU</name>
<gene>
    <name evidence="1" type="primary">ubiG</name>
    <name type="ordered locus">bll0214</name>
</gene>
<feature type="chain" id="PRO_0000193371" description="Ubiquinone biosynthesis O-methyltransferase">
    <location>
        <begin position="1"/>
        <end position="253"/>
    </location>
</feature>
<feature type="binding site" evidence="1">
    <location>
        <position position="47"/>
    </location>
    <ligand>
        <name>S-adenosyl-L-methionine</name>
        <dbReference type="ChEBI" id="CHEBI:59789"/>
    </ligand>
</feature>
<feature type="binding site" evidence="1">
    <location>
        <position position="78"/>
    </location>
    <ligand>
        <name>S-adenosyl-L-methionine</name>
        <dbReference type="ChEBI" id="CHEBI:59789"/>
    </ligand>
</feature>
<feature type="binding site" evidence="1">
    <location>
        <position position="99"/>
    </location>
    <ligand>
        <name>S-adenosyl-L-methionine</name>
        <dbReference type="ChEBI" id="CHEBI:59789"/>
    </ligand>
</feature>
<feature type="binding site" evidence="1">
    <location>
        <position position="141"/>
    </location>
    <ligand>
        <name>S-adenosyl-L-methionine</name>
        <dbReference type="ChEBI" id="CHEBI:59789"/>
    </ligand>
</feature>
<dbReference type="EC" id="2.1.1.222" evidence="1"/>
<dbReference type="EC" id="2.1.1.64" evidence="1"/>
<dbReference type="EMBL" id="BA000040">
    <property type="protein sequence ID" value="BAC45479.1"/>
    <property type="molecule type" value="Genomic_DNA"/>
</dbReference>
<dbReference type="RefSeq" id="NP_766854.1">
    <property type="nucleotide sequence ID" value="NC_004463.1"/>
</dbReference>
<dbReference type="SMR" id="Q89XU2"/>
<dbReference type="FunCoup" id="Q89XU2">
    <property type="interactions" value="538"/>
</dbReference>
<dbReference type="STRING" id="224911.AAV28_40315"/>
<dbReference type="EnsemblBacteria" id="BAC45479">
    <property type="protein sequence ID" value="BAC45479"/>
    <property type="gene ID" value="BAC45479"/>
</dbReference>
<dbReference type="KEGG" id="bja:bll0214"/>
<dbReference type="PATRIC" id="fig|224911.5.peg.208"/>
<dbReference type="eggNOG" id="COG2227">
    <property type="taxonomic scope" value="Bacteria"/>
</dbReference>
<dbReference type="HOGENOM" id="CLU_042432_0_0_5"/>
<dbReference type="InParanoid" id="Q89XU2"/>
<dbReference type="OrthoDB" id="9801538at2"/>
<dbReference type="PhylomeDB" id="Q89XU2"/>
<dbReference type="UniPathway" id="UPA00232"/>
<dbReference type="Proteomes" id="UP000002526">
    <property type="component" value="Chromosome"/>
</dbReference>
<dbReference type="GO" id="GO:0102208">
    <property type="term" value="F:2-polyprenyl-6-hydroxyphenol methylase activity"/>
    <property type="evidence" value="ECO:0007669"/>
    <property type="project" value="UniProtKB-EC"/>
</dbReference>
<dbReference type="GO" id="GO:0061542">
    <property type="term" value="F:3-demethylubiquinol 3-O-methyltransferase activity"/>
    <property type="evidence" value="ECO:0007669"/>
    <property type="project" value="UniProtKB-UniRule"/>
</dbReference>
<dbReference type="GO" id="GO:0008168">
    <property type="term" value="F:methyltransferase activity"/>
    <property type="evidence" value="ECO:0000318"/>
    <property type="project" value="GO_Central"/>
</dbReference>
<dbReference type="GO" id="GO:0010420">
    <property type="term" value="F:polyprenyldihydroxybenzoate methyltransferase activity"/>
    <property type="evidence" value="ECO:0007669"/>
    <property type="project" value="InterPro"/>
</dbReference>
<dbReference type="GO" id="GO:0032259">
    <property type="term" value="P:methylation"/>
    <property type="evidence" value="ECO:0007669"/>
    <property type="project" value="UniProtKB-KW"/>
</dbReference>
<dbReference type="CDD" id="cd02440">
    <property type="entry name" value="AdoMet_MTases"/>
    <property type="match status" value="1"/>
</dbReference>
<dbReference type="Gene3D" id="3.40.50.150">
    <property type="entry name" value="Vaccinia Virus protein VP39"/>
    <property type="match status" value="1"/>
</dbReference>
<dbReference type="HAMAP" id="MF_00472">
    <property type="entry name" value="UbiG"/>
    <property type="match status" value="1"/>
</dbReference>
<dbReference type="InterPro" id="IPR029063">
    <property type="entry name" value="SAM-dependent_MTases_sf"/>
</dbReference>
<dbReference type="InterPro" id="IPR010233">
    <property type="entry name" value="UbiG_MeTrfase"/>
</dbReference>
<dbReference type="NCBIfam" id="TIGR01983">
    <property type="entry name" value="UbiG"/>
    <property type="match status" value="1"/>
</dbReference>
<dbReference type="PANTHER" id="PTHR43464">
    <property type="entry name" value="METHYLTRANSFERASE"/>
    <property type="match status" value="1"/>
</dbReference>
<dbReference type="PANTHER" id="PTHR43464:SF19">
    <property type="entry name" value="UBIQUINONE BIOSYNTHESIS O-METHYLTRANSFERASE, MITOCHONDRIAL"/>
    <property type="match status" value="1"/>
</dbReference>
<dbReference type="Pfam" id="PF13489">
    <property type="entry name" value="Methyltransf_23"/>
    <property type="match status" value="1"/>
</dbReference>
<dbReference type="SUPFAM" id="SSF53335">
    <property type="entry name" value="S-adenosyl-L-methionine-dependent methyltransferases"/>
    <property type="match status" value="1"/>
</dbReference>
<accession>Q89XU2</accession>
<evidence type="ECO:0000255" key="1">
    <source>
        <dbReference type="HAMAP-Rule" id="MF_00472"/>
    </source>
</evidence>
<proteinExistence type="inferred from homology"/>
<organism>
    <name type="scientific">Bradyrhizobium diazoefficiens (strain JCM 10833 / BCRC 13528 / IAM 13628 / NBRC 14792 / USDA 110)</name>
    <dbReference type="NCBI Taxonomy" id="224911"/>
    <lineage>
        <taxon>Bacteria</taxon>
        <taxon>Pseudomonadati</taxon>
        <taxon>Pseudomonadota</taxon>
        <taxon>Alphaproteobacteria</taxon>
        <taxon>Hyphomicrobiales</taxon>
        <taxon>Nitrobacteraceae</taxon>
        <taxon>Bradyrhizobium</taxon>
    </lineage>
</organism>